<keyword id="KW-1185">Reference proteome</keyword>
<keyword id="KW-0687">Ribonucleoprotein</keyword>
<keyword id="KW-0689">Ribosomal protein</keyword>
<organism>
    <name type="scientific">Jannaschia sp. (strain CCS1)</name>
    <dbReference type="NCBI Taxonomy" id="290400"/>
    <lineage>
        <taxon>Bacteria</taxon>
        <taxon>Pseudomonadati</taxon>
        <taxon>Pseudomonadota</taxon>
        <taxon>Alphaproteobacteria</taxon>
        <taxon>Rhodobacterales</taxon>
        <taxon>Roseobacteraceae</taxon>
        <taxon>Jannaschia</taxon>
    </lineage>
</organism>
<gene>
    <name evidence="1" type="primary">rpmB</name>
    <name type="ordered locus">Jann_3424</name>
</gene>
<evidence type="ECO:0000255" key="1">
    <source>
        <dbReference type="HAMAP-Rule" id="MF_00373"/>
    </source>
</evidence>
<evidence type="ECO:0000256" key="2">
    <source>
        <dbReference type="SAM" id="MobiDB-lite"/>
    </source>
</evidence>
<evidence type="ECO:0000305" key="3"/>
<name>RL28_JANSC</name>
<comment type="similarity">
    <text evidence="1">Belongs to the bacterial ribosomal protein bL28 family.</text>
</comment>
<protein>
    <recommendedName>
        <fullName evidence="1">Large ribosomal subunit protein bL28</fullName>
    </recommendedName>
    <alternativeName>
        <fullName evidence="3">50S ribosomal protein L28</fullName>
    </alternativeName>
</protein>
<reference key="1">
    <citation type="submission" date="2006-02" db="EMBL/GenBank/DDBJ databases">
        <title>Complete sequence of chromosome of Jannaschia sp. CCS1.</title>
        <authorList>
            <consortium name="US DOE Joint Genome Institute"/>
            <person name="Copeland A."/>
            <person name="Lucas S."/>
            <person name="Lapidus A."/>
            <person name="Barry K."/>
            <person name="Detter J.C."/>
            <person name="Glavina del Rio T."/>
            <person name="Hammon N."/>
            <person name="Israni S."/>
            <person name="Pitluck S."/>
            <person name="Brettin T."/>
            <person name="Bruce D."/>
            <person name="Han C."/>
            <person name="Tapia R."/>
            <person name="Gilna P."/>
            <person name="Chertkov O."/>
            <person name="Saunders E."/>
            <person name="Schmutz J."/>
            <person name="Larimer F."/>
            <person name="Land M."/>
            <person name="Kyrpides N."/>
            <person name="Lykidis A."/>
            <person name="Moran M.A."/>
            <person name="Belas R."/>
            <person name="Ye W."/>
            <person name="Buchan A."/>
            <person name="Gonzalez J.M."/>
            <person name="Schell M.A."/>
            <person name="Richardson P."/>
        </authorList>
    </citation>
    <scope>NUCLEOTIDE SEQUENCE [LARGE SCALE GENOMIC DNA]</scope>
    <source>
        <strain>CCS1</strain>
    </source>
</reference>
<proteinExistence type="inferred from homology"/>
<dbReference type="EMBL" id="CP000264">
    <property type="protein sequence ID" value="ABD56341.1"/>
    <property type="molecule type" value="Genomic_DNA"/>
</dbReference>
<dbReference type="RefSeq" id="WP_011456543.1">
    <property type="nucleotide sequence ID" value="NC_007802.1"/>
</dbReference>
<dbReference type="SMR" id="Q28LS1"/>
<dbReference type="STRING" id="290400.Jann_3424"/>
<dbReference type="KEGG" id="jan:Jann_3424"/>
<dbReference type="eggNOG" id="COG0227">
    <property type="taxonomic scope" value="Bacteria"/>
</dbReference>
<dbReference type="HOGENOM" id="CLU_064548_4_2_5"/>
<dbReference type="OrthoDB" id="9805609at2"/>
<dbReference type="Proteomes" id="UP000008326">
    <property type="component" value="Chromosome"/>
</dbReference>
<dbReference type="GO" id="GO:0022625">
    <property type="term" value="C:cytosolic large ribosomal subunit"/>
    <property type="evidence" value="ECO:0007669"/>
    <property type="project" value="TreeGrafter"/>
</dbReference>
<dbReference type="GO" id="GO:0003735">
    <property type="term" value="F:structural constituent of ribosome"/>
    <property type="evidence" value="ECO:0007669"/>
    <property type="project" value="InterPro"/>
</dbReference>
<dbReference type="GO" id="GO:0006412">
    <property type="term" value="P:translation"/>
    <property type="evidence" value="ECO:0007669"/>
    <property type="project" value="UniProtKB-UniRule"/>
</dbReference>
<dbReference type="Gene3D" id="2.30.170.40">
    <property type="entry name" value="Ribosomal protein L28/L24"/>
    <property type="match status" value="1"/>
</dbReference>
<dbReference type="HAMAP" id="MF_00373">
    <property type="entry name" value="Ribosomal_bL28"/>
    <property type="match status" value="1"/>
</dbReference>
<dbReference type="InterPro" id="IPR026569">
    <property type="entry name" value="Ribosomal_bL28"/>
</dbReference>
<dbReference type="InterPro" id="IPR034704">
    <property type="entry name" value="Ribosomal_bL28/bL31-like_sf"/>
</dbReference>
<dbReference type="InterPro" id="IPR001383">
    <property type="entry name" value="Ribosomal_bL28_bact-type"/>
</dbReference>
<dbReference type="InterPro" id="IPR037147">
    <property type="entry name" value="Ribosomal_bL28_sf"/>
</dbReference>
<dbReference type="NCBIfam" id="TIGR00009">
    <property type="entry name" value="L28"/>
    <property type="match status" value="1"/>
</dbReference>
<dbReference type="PANTHER" id="PTHR13528">
    <property type="entry name" value="39S RIBOSOMAL PROTEIN L28, MITOCHONDRIAL"/>
    <property type="match status" value="1"/>
</dbReference>
<dbReference type="PANTHER" id="PTHR13528:SF2">
    <property type="entry name" value="LARGE RIBOSOMAL SUBUNIT PROTEIN BL28M"/>
    <property type="match status" value="1"/>
</dbReference>
<dbReference type="Pfam" id="PF00830">
    <property type="entry name" value="Ribosomal_L28"/>
    <property type="match status" value="1"/>
</dbReference>
<dbReference type="SUPFAM" id="SSF143800">
    <property type="entry name" value="L28p-like"/>
    <property type="match status" value="1"/>
</dbReference>
<sequence>MSRVCELTGKGPMTGNNVSHANNKTKRRFLPNLSDVTLGSDLLDRRFKFRISNAALRTVDHRGGLDAFMAKAKDDELSTRALKIKKEIVKAQAAQA</sequence>
<accession>Q28LS1</accession>
<feature type="chain" id="PRO_1000007256" description="Large ribosomal subunit protein bL28">
    <location>
        <begin position="1"/>
        <end position="96"/>
    </location>
</feature>
<feature type="region of interest" description="Disordered" evidence="2">
    <location>
        <begin position="1"/>
        <end position="21"/>
    </location>
</feature>